<gene>
    <name type="primary">YAB3</name>
    <name type="ordered locus">Os10g0508300</name>
    <name type="ordered locus">LOC_Os10g36420</name>
    <name type="ORF">OSJNBb0015K05.5</name>
    <name type="ORF">OSJNBb0091N21.48</name>
</gene>
<reference key="1">
    <citation type="journal article" date="2007" name="Mol. Genet. Genomics">
        <title>Molecular characterization the YABBY gene family in Oryza sativa and expression analysis of OsYABBY1.</title>
        <authorList>
            <person name="Toriba T."/>
            <person name="Harada K."/>
            <person name="Takamura A."/>
            <person name="Nakamura H."/>
            <person name="Ichikawa H."/>
            <person name="Suzaki T."/>
            <person name="Hirano H.-Y."/>
        </authorList>
    </citation>
    <scope>NUCLEOTIDE SEQUENCE [MRNA]</scope>
    <scope>TISSUE SPECIFICITY</scope>
    <scope>GENE FAMILY</scope>
    <scope>NOMENCLATURE</scope>
    <source>
        <strain>cv. Nipponbare</strain>
    </source>
</reference>
<reference key="2">
    <citation type="journal article" date="2003" name="Science">
        <title>In-depth view of structure, activity, and evolution of rice chromosome 10.</title>
        <authorList>
            <person name="Yu Y."/>
            <person name="Rambo T."/>
            <person name="Currie J."/>
            <person name="Saski C."/>
            <person name="Kim H.-R."/>
            <person name="Collura K."/>
            <person name="Thompson S."/>
            <person name="Simmons J."/>
            <person name="Yang T.-J."/>
            <person name="Nah G."/>
            <person name="Patel A.J."/>
            <person name="Thurmond S."/>
            <person name="Henry D."/>
            <person name="Oates R."/>
            <person name="Palmer M."/>
            <person name="Pries G."/>
            <person name="Gibson J."/>
            <person name="Anderson H."/>
            <person name="Paradkar M."/>
            <person name="Crane L."/>
            <person name="Dale J."/>
            <person name="Carver M.B."/>
            <person name="Wood T."/>
            <person name="Frisch D."/>
            <person name="Engler F."/>
            <person name="Soderlund C."/>
            <person name="Palmer L.E."/>
            <person name="Teytelman L."/>
            <person name="Nascimento L."/>
            <person name="De la Bastide M."/>
            <person name="Spiegel L."/>
            <person name="Ware D."/>
            <person name="O'Shaughnessy A."/>
            <person name="Dike S."/>
            <person name="Dedhia N."/>
            <person name="Preston R."/>
            <person name="Huang E."/>
            <person name="Ferraro K."/>
            <person name="Kuit K."/>
            <person name="Miller B."/>
            <person name="Zutavern T."/>
            <person name="Katzenberger F."/>
            <person name="Muller S."/>
            <person name="Balija V."/>
            <person name="Martienssen R.A."/>
            <person name="Stein L."/>
            <person name="Minx P."/>
            <person name="Johnson D."/>
            <person name="Cordum H."/>
            <person name="Mardis E."/>
            <person name="Cheng Z."/>
            <person name="Jiang J."/>
            <person name="Wilson R."/>
            <person name="McCombie W.R."/>
            <person name="Wing R.A."/>
            <person name="Yuan Q."/>
            <person name="Ouyang S."/>
            <person name="Liu J."/>
            <person name="Jones K.M."/>
            <person name="Gansberger K."/>
            <person name="Moffat K."/>
            <person name="Hill J."/>
            <person name="Tsitrin T."/>
            <person name="Overton L."/>
            <person name="Bera J."/>
            <person name="Kim M."/>
            <person name="Jin S."/>
            <person name="Tallon L."/>
            <person name="Ciecko A."/>
            <person name="Pai G."/>
            <person name="Van Aken S."/>
            <person name="Utterback T."/>
            <person name="Reidmuller S."/>
            <person name="Bormann J."/>
            <person name="Feldblyum T."/>
            <person name="Hsiao J."/>
            <person name="Zismann V."/>
            <person name="Blunt S."/>
            <person name="de Vazeille A.R."/>
            <person name="Shaffer T."/>
            <person name="Koo H."/>
            <person name="Suh B."/>
            <person name="Yang Q."/>
            <person name="Haas B."/>
            <person name="Peterson J."/>
            <person name="Pertea M."/>
            <person name="Volfovsky N."/>
            <person name="Wortman J."/>
            <person name="White O."/>
            <person name="Salzberg S.L."/>
            <person name="Fraser C.M."/>
            <person name="Buell C.R."/>
            <person name="Messing J."/>
            <person name="Song R."/>
            <person name="Fuks G."/>
            <person name="Llaca V."/>
            <person name="Kovchak S."/>
            <person name="Young S."/>
            <person name="Bowers J.E."/>
            <person name="Paterson A.H."/>
            <person name="Johns M.A."/>
            <person name="Mao L."/>
            <person name="Pan H."/>
            <person name="Dean R.A."/>
        </authorList>
    </citation>
    <scope>NUCLEOTIDE SEQUENCE [LARGE SCALE GENOMIC DNA]</scope>
    <source>
        <strain>cv. Nipponbare</strain>
    </source>
</reference>
<reference key="3">
    <citation type="journal article" date="2005" name="Nature">
        <title>The map-based sequence of the rice genome.</title>
        <authorList>
            <consortium name="International rice genome sequencing project (IRGSP)"/>
        </authorList>
    </citation>
    <scope>NUCLEOTIDE SEQUENCE [LARGE SCALE GENOMIC DNA]</scope>
    <source>
        <strain>cv. Nipponbare</strain>
    </source>
</reference>
<reference key="4">
    <citation type="journal article" date="2008" name="Nucleic Acids Res.">
        <title>The rice annotation project database (RAP-DB): 2008 update.</title>
        <authorList>
            <consortium name="The rice annotation project (RAP)"/>
        </authorList>
    </citation>
    <scope>GENOME REANNOTATION</scope>
    <source>
        <strain>cv. Nipponbare</strain>
    </source>
</reference>
<reference key="5">
    <citation type="journal article" date="2013" name="Rice">
        <title>Improvement of the Oryza sativa Nipponbare reference genome using next generation sequence and optical map data.</title>
        <authorList>
            <person name="Kawahara Y."/>
            <person name="de la Bastide M."/>
            <person name="Hamilton J.P."/>
            <person name="Kanamori H."/>
            <person name="McCombie W.R."/>
            <person name="Ouyang S."/>
            <person name="Schwartz D.C."/>
            <person name="Tanaka T."/>
            <person name="Wu J."/>
            <person name="Zhou S."/>
            <person name="Childs K.L."/>
            <person name="Davidson R.M."/>
            <person name="Lin H."/>
            <person name="Quesada-Ocampo L."/>
            <person name="Vaillancourt B."/>
            <person name="Sakai H."/>
            <person name="Lee S.S."/>
            <person name="Kim J."/>
            <person name="Numa H."/>
            <person name="Itoh T."/>
            <person name="Buell C.R."/>
            <person name="Matsumoto T."/>
        </authorList>
    </citation>
    <scope>GENOME REANNOTATION</scope>
    <source>
        <strain>cv. Nipponbare</strain>
    </source>
</reference>
<comment type="subcellular location">
    <subcellularLocation>
        <location evidence="1">Nucleus</location>
    </subcellularLocation>
</comment>
<comment type="tissue specificity">
    <text evidence="3">Expressed in shoot apex and young inflorescences.</text>
</comment>
<comment type="similarity">
    <text evidence="4">Belongs to the YABBY family.</text>
</comment>
<comment type="sequence caution" evidence="4">
    <conflict type="erroneous gene model prediction">
        <sequence resource="EMBL-CDS" id="AAP54543"/>
    </conflict>
</comment>
<comment type="sequence caution" evidence="4">
    <conflict type="erroneous gene model prediction">
        <sequence resource="EMBL-CDS" id="BAF26935"/>
    </conflict>
</comment>
<organism>
    <name type="scientific">Oryza sativa subsp. japonica</name>
    <name type="common">Rice</name>
    <dbReference type="NCBI Taxonomy" id="39947"/>
    <lineage>
        <taxon>Eukaryota</taxon>
        <taxon>Viridiplantae</taxon>
        <taxon>Streptophyta</taxon>
        <taxon>Embryophyta</taxon>
        <taxon>Tracheophyta</taxon>
        <taxon>Spermatophyta</taxon>
        <taxon>Magnoliopsida</taxon>
        <taxon>Liliopsida</taxon>
        <taxon>Poales</taxon>
        <taxon>Poaceae</taxon>
        <taxon>BOP clade</taxon>
        <taxon>Oryzoideae</taxon>
        <taxon>Oryzeae</taxon>
        <taxon>Oryzinae</taxon>
        <taxon>Oryza</taxon>
        <taxon>Oryza sativa</taxon>
    </lineage>
</organism>
<dbReference type="EMBL" id="AB274015">
    <property type="protein sequence ID" value="BAF45804.1"/>
    <property type="molecule type" value="mRNA"/>
</dbReference>
<dbReference type="EMBL" id="AC090870">
    <property type="protein sequence ID" value="AAM95687.1"/>
    <property type="molecule type" value="Genomic_DNA"/>
</dbReference>
<dbReference type="EMBL" id="AC091122">
    <property type="protein sequence ID" value="AAM94935.1"/>
    <property type="molecule type" value="Genomic_DNA"/>
</dbReference>
<dbReference type="EMBL" id="DP000086">
    <property type="protein sequence ID" value="AAP54543.2"/>
    <property type="status" value="ALT_SEQ"/>
    <property type="molecule type" value="Genomic_DNA"/>
</dbReference>
<dbReference type="EMBL" id="AP008216">
    <property type="protein sequence ID" value="BAF26935.2"/>
    <property type="status" value="ALT_SEQ"/>
    <property type="molecule type" value="Genomic_DNA"/>
</dbReference>
<dbReference type="EMBL" id="AP014966">
    <property type="protein sequence ID" value="BAT11593.1"/>
    <property type="molecule type" value="Genomic_DNA"/>
</dbReference>
<dbReference type="RefSeq" id="XP_015613818.1">
    <property type="nucleotide sequence ID" value="XM_015758332.1"/>
</dbReference>
<dbReference type="SMR" id="Q8L556"/>
<dbReference type="STRING" id="39947.Q8L556"/>
<dbReference type="PaxDb" id="39947-Q8L556"/>
<dbReference type="EnsemblPlants" id="Os10t0508300-01">
    <property type="protein sequence ID" value="Os10t0508300-01"/>
    <property type="gene ID" value="Os10g0508300"/>
</dbReference>
<dbReference type="Gramene" id="Os10t0508300-01">
    <property type="protein sequence ID" value="Os10t0508300-01"/>
    <property type="gene ID" value="Os10g0508300"/>
</dbReference>
<dbReference type="KEGG" id="dosa:Os10g0508300"/>
<dbReference type="eggNOG" id="ENOG502QQ88">
    <property type="taxonomic scope" value="Eukaryota"/>
</dbReference>
<dbReference type="HOGENOM" id="CLU_071156_1_0_1"/>
<dbReference type="InParanoid" id="Q8L556"/>
<dbReference type="OMA" id="RATLACN"/>
<dbReference type="OrthoDB" id="678334at2759"/>
<dbReference type="Proteomes" id="UP000000763">
    <property type="component" value="Chromosome 10"/>
</dbReference>
<dbReference type="Proteomes" id="UP000059680">
    <property type="component" value="Chromosome 10"/>
</dbReference>
<dbReference type="GO" id="GO:0005634">
    <property type="term" value="C:nucleus"/>
    <property type="evidence" value="ECO:0000318"/>
    <property type="project" value="GO_Central"/>
</dbReference>
<dbReference type="GO" id="GO:0008270">
    <property type="term" value="F:zinc ion binding"/>
    <property type="evidence" value="ECO:0007669"/>
    <property type="project" value="UniProtKB-KW"/>
</dbReference>
<dbReference type="GO" id="GO:0010158">
    <property type="term" value="P:abaxial cell fate specification"/>
    <property type="evidence" value="ECO:0000318"/>
    <property type="project" value="GO_Central"/>
</dbReference>
<dbReference type="GO" id="GO:0045165">
    <property type="term" value="P:cell fate commitment"/>
    <property type="evidence" value="ECO:0000318"/>
    <property type="project" value="GO_Central"/>
</dbReference>
<dbReference type="GO" id="GO:0010154">
    <property type="term" value="P:fruit development"/>
    <property type="evidence" value="ECO:0000318"/>
    <property type="project" value="GO_Central"/>
</dbReference>
<dbReference type="GO" id="GO:0009944">
    <property type="term" value="P:polarity specification of adaxial/abaxial axis"/>
    <property type="evidence" value="ECO:0000318"/>
    <property type="project" value="GO_Central"/>
</dbReference>
<dbReference type="GO" id="GO:2000024">
    <property type="term" value="P:regulation of leaf development"/>
    <property type="evidence" value="ECO:0000318"/>
    <property type="project" value="GO_Central"/>
</dbReference>
<dbReference type="GO" id="GO:1902183">
    <property type="term" value="P:regulation of shoot apical meristem development"/>
    <property type="evidence" value="ECO:0000318"/>
    <property type="project" value="GO_Central"/>
</dbReference>
<dbReference type="CDD" id="cd00084">
    <property type="entry name" value="HMG-box_SF"/>
    <property type="match status" value="1"/>
</dbReference>
<dbReference type="FunFam" id="1.10.30.10:FF:000047">
    <property type="entry name" value="Axial regulator YABBY"/>
    <property type="match status" value="1"/>
</dbReference>
<dbReference type="Gene3D" id="1.10.30.10">
    <property type="entry name" value="High mobility group box domain"/>
    <property type="match status" value="1"/>
</dbReference>
<dbReference type="InterPro" id="IPR036910">
    <property type="entry name" value="HMG_box_dom_sf"/>
</dbReference>
<dbReference type="InterPro" id="IPR006780">
    <property type="entry name" value="YABBY"/>
</dbReference>
<dbReference type="InterPro" id="IPR056775">
    <property type="entry name" value="YABBY_C"/>
</dbReference>
<dbReference type="InterPro" id="IPR056776">
    <property type="entry name" value="YABBY_N"/>
</dbReference>
<dbReference type="PANTHER" id="PTHR31675:SF0">
    <property type="entry name" value="AXIAL REGULATOR YABBY 1"/>
    <property type="match status" value="1"/>
</dbReference>
<dbReference type="PANTHER" id="PTHR31675">
    <property type="entry name" value="PROTEIN YABBY 6-RELATED"/>
    <property type="match status" value="1"/>
</dbReference>
<dbReference type="Pfam" id="PF04690">
    <property type="entry name" value="YABBY"/>
    <property type="match status" value="1"/>
</dbReference>
<dbReference type="Pfam" id="PF24868">
    <property type="entry name" value="YABBY_N"/>
    <property type="match status" value="1"/>
</dbReference>
<dbReference type="SUPFAM" id="SSF47095">
    <property type="entry name" value="HMG-box"/>
    <property type="match status" value="1"/>
</dbReference>
<evidence type="ECO:0000250" key="1"/>
<evidence type="ECO:0000256" key="2">
    <source>
        <dbReference type="SAM" id="MobiDB-lite"/>
    </source>
</evidence>
<evidence type="ECO:0000269" key="3">
    <source>
    </source>
</evidence>
<evidence type="ECO:0000305" key="4"/>
<accession>Q8L556</accession>
<accession>A0A0P0XWF6</accession>
<accession>Q0IWI0</accession>
<accession>Q7G290</accession>
<proteinExistence type="evidence at transcript level"/>
<name>YAB3_ORYSJ</name>
<feature type="chain" id="PRO_0000308695" description="Protein YABBY 3">
    <location>
        <begin position="1"/>
        <end position="313"/>
    </location>
</feature>
<feature type="zinc finger region" description="C4-type">
    <location>
        <begin position="65"/>
        <end position="92"/>
    </location>
</feature>
<feature type="region of interest" description="Disordered" evidence="2">
    <location>
        <begin position="107"/>
        <end position="149"/>
    </location>
</feature>
<feature type="region of interest" description="Disordered" evidence="2">
    <location>
        <begin position="180"/>
        <end position="221"/>
    </location>
</feature>
<feature type="compositionally biased region" description="Pro residues" evidence="2">
    <location>
        <begin position="112"/>
        <end position="128"/>
    </location>
</feature>
<protein>
    <recommendedName>
        <fullName>Protein YABBY 3</fullName>
    </recommendedName>
    <alternativeName>
        <fullName>OsYAB4</fullName>
    </alternativeName>
    <alternativeName>
        <fullName>OsYABBY3</fullName>
    </alternativeName>
</protein>
<keyword id="KW-0479">Metal-binding</keyword>
<keyword id="KW-0539">Nucleus</keyword>
<keyword id="KW-1185">Reference proteome</keyword>
<keyword id="KW-0862">Zinc</keyword>
<keyword id="KW-0863">Zinc-finger</keyword>
<sequence>MSSSSSSSASSAAAAAFRPAVVQREQQVVEEKFPAAAAAMREMVLPPVAAAAADSEQEQLCYVHCHYCDTVLVVSVPSSSLFETVTVRCGHCSSLLTVNMRGLLLPTTAAAAPPPPPPPPPPPPPPAAHFPHSLNLAPANPPHHHSLLDEISTANSPTQLLLEQHGLGGLMASAASCRNNNSPAAAAAPPPPTSQGKAAAKEPSPRTNTAVINRPPEKRQRVPSAYNRFIKDEIQRIKAGNPDISHREAFSAAAKNWAHFPHIHFGLMPDHQGLKKTSLLPQDHQRKDGLLKEGLYAAAAAAAAAANMGVAPY</sequence>